<proteinExistence type="inferred from homology"/>
<sequence length="109" mass="12643">MSAQPVDIQVFGRSLRVNCPPEQQDALNMAAEDLSQRLQDLKVRTRVNNTEQLVFIAALNVCHELAQERLKTRDYASNMEQRIRMLQQTIEQALLEQGRISDRQDTQFE</sequence>
<comment type="function">
    <text evidence="1">Activator of cell division through the inhibition of FtsZ GTPase activity, therefore promoting FtsZ assembly into bundles of protofilaments necessary for the formation of the division Z ring. It is recruited early at mid-cell but it is not essential for cell division.</text>
</comment>
<comment type="subunit">
    <text evidence="1">Homodimer. Interacts with FtsZ.</text>
</comment>
<comment type="subcellular location">
    <subcellularLocation>
        <location evidence="1">Cytoplasm</location>
    </subcellularLocation>
    <text evidence="1">Localizes at mid-cell.</text>
</comment>
<comment type="similarity">
    <text evidence="1">Belongs to the ZapA family. Type 1 subfamily.</text>
</comment>
<comment type="sequence caution" evidence="2">
    <conflict type="erroneous initiation">
        <sequence resource="EMBL-CDS" id="AAM86849"/>
    </conflict>
</comment>
<comment type="sequence caution" evidence="2">
    <conflict type="erroneous initiation">
        <sequence resource="EMBL-CDS" id="AAS63759"/>
    </conflict>
</comment>
<keyword id="KW-0131">Cell cycle</keyword>
<keyword id="KW-0132">Cell division</keyword>
<keyword id="KW-0175">Coiled coil</keyword>
<keyword id="KW-0963">Cytoplasm</keyword>
<keyword id="KW-1185">Reference proteome</keyword>
<keyword id="KW-0717">Septation</keyword>
<name>ZAPA_YERPE</name>
<protein>
    <recommendedName>
        <fullName evidence="1">Cell division protein ZapA</fullName>
    </recommendedName>
    <alternativeName>
        <fullName evidence="1">Z ring-associated protein ZapA</fullName>
    </alternativeName>
</protein>
<accession>Q0WIC8</accession>
<accession>Q74Q85</accession>
<accession>Q8CZW1</accession>
<feature type="chain" id="PRO_0000345666" description="Cell division protein ZapA">
    <location>
        <begin position="1"/>
        <end position="109"/>
    </location>
</feature>
<feature type="coiled-coil region" evidence="1">
    <location>
        <begin position="22"/>
        <end position="99"/>
    </location>
</feature>
<evidence type="ECO:0000255" key="1">
    <source>
        <dbReference type="HAMAP-Rule" id="MF_02012"/>
    </source>
</evidence>
<evidence type="ECO:0000305" key="2"/>
<gene>
    <name evidence="1" type="primary">zapA</name>
    <name type="ordered locus">YPO0912</name>
    <name type="ordered locus">y3299</name>
    <name type="ordered locus">YP_3609</name>
</gene>
<reference key="1">
    <citation type="journal article" date="2001" name="Nature">
        <title>Genome sequence of Yersinia pestis, the causative agent of plague.</title>
        <authorList>
            <person name="Parkhill J."/>
            <person name="Wren B.W."/>
            <person name="Thomson N.R."/>
            <person name="Titball R.W."/>
            <person name="Holden M.T.G."/>
            <person name="Prentice M.B."/>
            <person name="Sebaihia M."/>
            <person name="James K.D."/>
            <person name="Churcher C.M."/>
            <person name="Mungall K.L."/>
            <person name="Baker S."/>
            <person name="Basham D."/>
            <person name="Bentley S.D."/>
            <person name="Brooks K."/>
            <person name="Cerdeno-Tarraga A.-M."/>
            <person name="Chillingworth T."/>
            <person name="Cronin A."/>
            <person name="Davies R.M."/>
            <person name="Davis P."/>
            <person name="Dougan G."/>
            <person name="Feltwell T."/>
            <person name="Hamlin N."/>
            <person name="Holroyd S."/>
            <person name="Jagels K."/>
            <person name="Karlyshev A.V."/>
            <person name="Leather S."/>
            <person name="Moule S."/>
            <person name="Oyston P.C.F."/>
            <person name="Quail M.A."/>
            <person name="Rutherford K.M."/>
            <person name="Simmonds M."/>
            <person name="Skelton J."/>
            <person name="Stevens K."/>
            <person name="Whitehead S."/>
            <person name="Barrell B.G."/>
        </authorList>
    </citation>
    <scope>NUCLEOTIDE SEQUENCE [LARGE SCALE GENOMIC DNA]</scope>
    <source>
        <strain>CO-92 / Biovar Orientalis</strain>
    </source>
</reference>
<reference key="2">
    <citation type="journal article" date="2002" name="J. Bacteriol.">
        <title>Genome sequence of Yersinia pestis KIM.</title>
        <authorList>
            <person name="Deng W."/>
            <person name="Burland V."/>
            <person name="Plunkett G. III"/>
            <person name="Boutin A."/>
            <person name="Mayhew G.F."/>
            <person name="Liss P."/>
            <person name="Perna N.T."/>
            <person name="Rose D.J."/>
            <person name="Mau B."/>
            <person name="Zhou S."/>
            <person name="Schwartz D.C."/>
            <person name="Fetherston J.D."/>
            <person name="Lindler L.E."/>
            <person name="Brubaker R.R."/>
            <person name="Plano G.V."/>
            <person name="Straley S.C."/>
            <person name="McDonough K.A."/>
            <person name="Nilles M.L."/>
            <person name="Matson J.S."/>
            <person name="Blattner F.R."/>
            <person name="Perry R.D."/>
        </authorList>
    </citation>
    <scope>NUCLEOTIDE SEQUENCE [LARGE SCALE GENOMIC DNA]</scope>
    <source>
        <strain>KIM10+ / Biovar Mediaevalis</strain>
    </source>
</reference>
<reference key="3">
    <citation type="journal article" date="2004" name="DNA Res.">
        <title>Complete genome sequence of Yersinia pestis strain 91001, an isolate avirulent to humans.</title>
        <authorList>
            <person name="Song Y."/>
            <person name="Tong Z."/>
            <person name="Wang J."/>
            <person name="Wang L."/>
            <person name="Guo Z."/>
            <person name="Han Y."/>
            <person name="Zhang J."/>
            <person name="Pei D."/>
            <person name="Zhou D."/>
            <person name="Qin H."/>
            <person name="Pang X."/>
            <person name="Han Y."/>
            <person name="Zhai J."/>
            <person name="Li M."/>
            <person name="Cui B."/>
            <person name="Qi Z."/>
            <person name="Jin L."/>
            <person name="Dai R."/>
            <person name="Chen F."/>
            <person name="Li S."/>
            <person name="Ye C."/>
            <person name="Du Z."/>
            <person name="Lin W."/>
            <person name="Wang J."/>
            <person name="Yu J."/>
            <person name="Yang H."/>
            <person name="Wang J."/>
            <person name="Huang P."/>
            <person name="Yang R."/>
        </authorList>
    </citation>
    <scope>NUCLEOTIDE SEQUENCE [LARGE SCALE GENOMIC DNA]</scope>
    <source>
        <strain>91001 / Biovar Mediaevalis</strain>
    </source>
</reference>
<organism>
    <name type="scientific">Yersinia pestis</name>
    <dbReference type="NCBI Taxonomy" id="632"/>
    <lineage>
        <taxon>Bacteria</taxon>
        <taxon>Pseudomonadati</taxon>
        <taxon>Pseudomonadota</taxon>
        <taxon>Gammaproteobacteria</taxon>
        <taxon>Enterobacterales</taxon>
        <taxon>Yersiniaceae</taxon>
        <taxon>Yersinia</taxon>
    </lineage>
</organism>
<dbReference type="EMBL" id="AL590842">
    <property type="protein sequence ID" value="CAL19579.1"/>
    <property type="molecule type" value="Genomic_DNA"/>
</dbReference>
<dbReference type="EMBL" id="AE009952">
    <property type="protein sequence ID" value="AAM86849.1"/>
    <property type="status" value="ALT_INIT"/>
    <property type="molecule type" value="Genomic_DNA"/>
</dbReference>
<dbReference type="EMBL" id="AE017042">
    <property type="protein sequence ID" value="AAS63759.1"/>
    <property type="status" value="ALT_INIT"/>
    <property type="molecule type" value="Genomic_DNA"/>
</dbReference>
<dbReference type="PIR" id="AI0111">
    <property type="entry name" value="AI0111"/>
</dbReference>
<dbReference type="RefSeq" id="WP_002209954.1">
    <property type="nucleotide sequence ID" value="NZ_WUCM01000038.1"/>
</dbReference>
<dbReference type="RefSeq" id="YP_002345960.1">
    <property type="nucleotide sequence ID" value="NC_003143.1"/>
</dbReference>
<dbReference type="SMR" id="Q0WIC8"/>
<dbReference type="STRING" id="214092.YPO0912"/>
<dbReference type="PaxDb" id="214092-YPO0912"/>
<dbReference type="DNASU" id="1148246"/>
<dbReference type="EnsemblBacteria" id="AAS63759">
    <property type="protein sequence ID" value="AAS63759"/>
    <property type="gene ID" value="YP_3609"/>
</dbReference>
<dbReference type="GeneID" id="96662508"/>
<dbReference type="KEGG" id="ype:YPO0912"/>
<dbReference type="KEGG" id="ypk:y3299"/>
<dbReference type="KEGG" id="ypm:YP_3609"/>
<dbReference type="PATRIC" id="fig|214092.21.peg.1186"/>
<dbReference type="eggNOG" id="COG3027">
    <property type="taxonomic scope" value="Bacteria"/>
</dbReference>
<dbReference type="HOGENOM" id="CLU_116623_3_0_6"/>
<dbReference type="OMA" id="NICYELH"/>
<dbReference type="OrthoDB" id="5917174at2"/>
<dbReference type="Proteomes" id="UP000000815">
    <property type="component" value="Chromosome"/>
</dbReference>
<dbReference type="Proteomes" id="UP000001019">
    <property type="component" value="Chromosome"/>
</dbReference>
<dbReference type="Proteomes" id="UP000002490">
    <property type="component" value="Chromosome"/>
</dbReference>
<dbReference type="GO" id="GO:0032153">
    <property type="term" value="C:cell division site"/>
    <property type="evidence" value="ECO:0000318"/>
    <property type="project" value="GO_Central"/>
</dbReference>
<dbReference type="GO" id="GO:0030428">
    <property type="term" value="C:cell septum"/>
    <property type="evidence" value="ECO:0000318"/>
    <property type="project" value="GO_Central"/>
</dbReference>
<dbReference type="GO" id="GO:0005829">
    <property type="term" value="C:cytosol"/>
    <property type="evidence" value="ECO:0000318"/>
    <property type="project" value="GO_Central"/>
</dbReference>
<dbReference type="GO" id="GO:0005886">
    <property type="term" value="C:plasma membrane"/>
    <property type="evidence" value="ECO:0007669"/>
    <property type="project" value="UniProtKB-UniRule"/>
</dbReference>
<dbReference type="GO" id="GO:0000917">
    <property type="term" value="P:division septum assembly"/>
    <property type="evidence" value="ECO:0000318"/>
    <property type="project" value="GO_Central"/>
</dbReference>
<dbReference type="GO" id="GO:0043093">
    <property type="term" value="P:FtsZ-dependent cytokinesis"/>
    <property type="evidence" value="ECO:0000318"/>
    <property type="project" value="GO_Central"/>
</dbReference>
<dbReference type="GO" id="GO:0000921">
    <property type="term" value="P:septin ring assembly"/>
    <property type="evidence" value="ECO:0000318"/>
    <property type="project" value="GO_Central"/>
</dbReference>
<dbReference type="FunFam" id="1.20.5.50:FF:000001">
    <property type="entry name" value="Cell division protein ZapA"/>
    <property type="match status" value="1"/>
</dbReference>
<dbReference type="FunFam" id="3.30.160.880:FF:000001">
    <property type="entry name" value="Cell division protein ZapA"/>
    <property type="match status" value="1"/>
</dbReference>
<dbReference type="Gene3D" id="1.20.5.50">
    <property type="match status" value="1"/>
</dbReference>
<dbReference type="Gene3D" id="3.30.160.880">
    <property type="entry name" value="Cell division protein ZapA protomer, N-terminal domain"/>
    <property type="match status" value="1"/>
</dbReference>
<dbReference type="HAMAP" id="MF_02012">
    <property type="entry name" value="ZapA_type1"/>
    <property type="match status" value="1"/>
</dbReference>
<dbReference type="InterPro" id="IPR007838">
    <property type="entry name" value="Cell_div_ZapA-like"/>
</dbReference>
<dbReference type="InterPro" id="IPR036192">
    <property type="entry name" value="Cell_div_ZapA-like_sf"/>
</dbReference>
<dbReference type="InterPro" id="IPR023771">
    <property type="entry name" value="Cell_div_ZapA_eubact"/>
</dbReference>
<dbReference type="InterPro" id="IPR042233">
    <property type="entry name" value="Cell_div_ZapA_N"/>
</dbReference>
<dbReference type="NCBIfam" id="NF008209">
    <property type="entry name" value="PRK10972.1"/>
    <property type="match status" value="1"/>
</dbReference>
<dbReference type="PANTHER" id="PTHR34981">
    <property type="entry name" value="CELL DIVISION PROTEIN ZAPA"/>
    <property type="match status" value="1"/>
</dbReference>
<dbReference type="PANTHER" id="PTHR34981:SF1">
    <property type="entry name" value="CELL DIVISION PROTEIN ZAPA"/>
    <property type="match status" value="1"/>
</dbReference>
<dbReference type="Pfam" id="PF05164">
    <property type="entry name" value="ZapA"/>
    <property type="match status" value="1"/>
</dbReference>
<dbReference type="SUPFAM" id="SSF102829">
    <property type="entry name" value="Cell division protein ZapA-like"/>
    <property type="match status" value="1"/>
</dbReference>